<sequence length="275" mass="30667">MSSFSYRTLTVALFALICCPGSDEKVFEVHVRPKKLAVEPKGSLKVNCSTTCNQPEVGGLETSLDKILLDEQAQWKHYLVSNISHDTVLQCHFTCSGKQESMNSNVSVYQPPRQVILTLQPTLVAVGKSFTIECRVPTVEPLDSLTLFLFRGNETLHYETFGKAAPAPQEATVTFNSTADRDDGHRNFSCLAVLDLMSRGGNIFHKHSAPKMLEIYEPVSDSQMVIIVTVVSVLLSLFVTSVLLCFIFGQHLRQQRMGTYGVRAAWRRLPQAFRP</sequence>
<comment type="function">
    <text evidence="1">ICAM proteins are ligands for the leukocyte adhesion protein LFA-1 (integrin alpha-L/beta-2). ICAM2 may play a role in lymphocyte recirculation by blocking LFA-1-dependent cell adhesion. It mediates adhesive interactions important for antigen-specific immune response, NK-cell mediated clearance, lymphocyte recirculation, and other cellular interactions important for immune response and surveillance (By similarity).</text>
</comment>
<comment type="subunit">
    <text evidence="3">Interacts with RDX, EZR and MSN.</text>
</comment>
<comment type="subcellular location">
    <subcellularLocation>
        <location evidence="4">Membrane</location>
        <topology evidence="4">Single-pass type I membrane protein</topology>
    </subcellularLocation>
    <subcellularLocation>
        <location evidence="3">Cell projection</location>
        <location evidence="3">Microvillus</location>
    </subcellularLocation>
    <text evidence="3">Co-localizes with RDX, EZR and MSN in microvilli.</text>
</comment>
<comment type="similarity">
    <text evidence="5">Belongs to the immunoglobulin superfamily. ICAM family.</text>
</comment>
<evidence type="ECO:0000250" key="1"/>
<evidence type="ECO:0000250" key="2">
    <source>
        <dbReference type="UniProtKB" id="P13598"/>
    </source>
</evidence>
<evidence type="ECO:0000250" key="3">
    <source>
        <dbReference type="UniProtKB" id="P35330"/>
    </source>
</evidence>
<evidence type="ECO:0000255" key="4"/>
<evidence type="ECO:0000305" key="5"/>
<keyword id="KW-0130">Cell adhesion</keyword>
<keyword id="KW-0966">Cell projection</keyword>
<keyword id="KW-1015">Disulfide bond</keyword>
<keyword id="KW-0325">Glycoprotein</keyword>
<keyword id="KW-0393">Immunoglobulin domain</keyword>
<keyword id="KW-0472">Membrane</keyword>
<keyword id="KW-1185">Reference proteome</keyword>
<keyword id="KW-0677">Repeat</keyword>
<keyword id="KW-0732">Signal</keyword>
<keyword id="KW-0812">Transmembrane</keyword>
<keyword id="KW-1133">Transmembrane helix</keyword>
<accession>Q5NKV2</accession>
<feature type="signal peptide" evidence="1">
    <location>
        <begin position="1"/>
        <end position="24"/>
    </location>
</feature>
<feature type="chain" id="PRO_0000014792" description="Intercellular adhesion molecule 2">
    <location>
        <begin position="25"/>
        <end position="275"/>
    </location>
</feature>
<feature type="topological domain" description="Extracellular" evidence="4">
    <location>
        <begin position="25"/>
        <end position="223"/>
    </location>
</feature>
<feature type="transmembrane region" description="Helical" evidence="4">
    <location>
        <begin position="224"/>
        <end position="248"/>
    </location>
</feature>
<feature type="topological domain" description="Cytoplasmic" evidence="4">
    <location>
        <begin position="249"/>
        <end position="275"/>
    </location>
</feature>
<feature type="domain" description="Ig-like C2-type 1">
    <location>
        <begin position="41"/>
        <end position="98"/>
    </location>
</feature>
<feature type="domain" description="Ig-like C2-type 2">
    <location>
        <begin position="127"/>
        <end position="197"/>
    </location>
</feature>
<feature type="region of interest" description="Required for interaction with EZR, MSN and RDX and co-localization to microvilli" evidence="3">
    <location>
        <begin position="251"/>
        <end position="275"/>
    </location>
</feature>
<feature type="glycosylation site" description="N-linked (GlcNAc...) asparagine" evidence="4">
    <location>
        <position position="47"/>
    </location>
</feature>
<feature type="glycosylation site" description="N-linked (GlcNAc...) asparagine" evidence="4">
    <location>
        <position position="82"/>
    </location>
</feature>
<feature type="glycosylation site" description="N-linked (GlcNAc...) asparagine" evidence="4">
    <location>
        <position position="105"/>
    </location>
</feature>
<feature type="glycosylation site" description="N-linked (GlcNAc...) asparagine" evidence="4">
    <location>
        <position position="153"/>
    </location>
</feature>
<feature type="glycosylation site" description="N-linked (GlcNAc...) asparagine" evidence="4">
    <location>
        <position position="176"/>
    </location>
</feature>
<feature type="glycosylation site" description="N-linked (GlcNAc...) asparagine" evidence="4">
    <location>
        <position position="187"/>
    </location>
</feature>
<feature type="disulfide bond" evidence="2">
    <location>
        <begin position="48"/>
        <end position="91"/>
    </location>
</feature>
<feature type="disulfide bond" evidence="2">
    <location>
        <begin position="52"/>
        <end position="95"/>
    </location>
</feature>
<feature type="disulfide bond" evidence="2">
    <location>
        <begin position="134"/>
        <end position="190"/>
    </location>
</feature>
<protein>
    <recommendedName>
        <fullName>Intercellular adhesion molecule 2</fullName>
        <shortName>ICAM-2</shortName>
    </recommendedName>
    <cdAntigenName>CD102</cdAntigenName>
</protein>
<name>ICAM2_PANTR</name>
<gene>
    <name type="primary">ICAM2</name>
</gene>
<dbReference type="EMBL" id="AF340049">
    <property type="protein sequence ID" value="AAQ14906.1"/>
    <property type="molecule type" value="mRNA"/>
</dbReference>
<dbReference type="EMBL" id="AF340050">
    <property type="protein sequence ID" value="AAQ14907.1"/>
    <property type="molecule type" value="mRNA"/>
</dbReference>
<dbReference type="RefSeq" id="NP_001009166.1">
    <property type="nucleotide sequence ID" value="NM_001009166.1"/>
</dbReference>
<dbReference type="RefSeq" id="XP_009431260.1">
    <property type="nucleotide sequence ID" value="XM_009432985.5"/>
</dbReference>
<dbReference type="RefSeq" id="XP_009431261.1">
    <property type="nucleotide sequence ID" value="XM_009432986.4"/>
</dbReference>
<dbReference type="RefSeq" id="XP_063654166.1">
    <property type="nucleotide sequence ID" value="XM_063798096.1"/>
</dbReference>
<dbReference type="SMR" id="Q5NKV2"/>
<dbReference type="FunCoup" id="Q5NKV2">
    <property type="interactions" value="441"/>
</dbReference>
<dbReference type="STRING" id="9598.ENSPTRP00000016198"/>
<dbReference type="GlyCosmos" id="Q5NKV2">
    <property type="glycosylation" value="6 sites, No reported glycans"/>
</dbReference>
<dbReference type="PaxDb" id="9598-ENSPTRP00000016198"/>
<dbReference type="Ensembl" id="ENSPTRT00000017489.5">
    <property type="protein sequence ID" value="ENSPTRP00000016198.4"/>
    <property type="gene ID" value="ENSPTRG00000009534.5"/>
</dbReference>
<dbReference type="GeneID" id="494137"/>
<dbReference type="CTD" id="3384"/>
<dbReference type="VGNC" id="VGNC:9329">
    <property type="gene designation" value="ICAM2"/>
</dbReference>
<dbReference type="eggNOG" id="ENOG502RZRA">
    <property type="taxonomic scope" value="Eukaryota"/>
</dbReference>
<dbReference type="GeneTree" id="ENSGT00940000161654"/>
<dbReference type="HOGENOM" id="CLU_088446_0_0_1"/>
<dbReference type="InParanoid" id="Q5NKV2"/>
<dbReference type="OMA" id="QVYEPVQ"/>
<dbReference type="OrthoDB" id="11558at9604"/>
<dbReference type="TreeFam" id="TF333745"/>
<dbReference type="Proteomes" id="UP000002277">
    <property type="component" value="Chromosome 17"/>
</dbReference>
<dbReference type="Bgee" id="ENSPTRG00000009534">
    <property type="expression patterns" value="Expressed in heart and 20 other cell types or tissues"/>
</dbReference>
<dbReference type="GO" id="GO:0032154">
    <property type="term" value="C:cleavage furrow"/>
    <property type="evidence" value="ECO:0007669"/>
    <property type="project" value="Ensembl"/>
</dbReference>
<dbReference type="GO" id="GO:0005902">
    <property type="term" value="C:microvillus"/>
    <property type="evidence" value="ECO:0000250"/>
    <property type="project" value="UniProtKB"/>
</dbReference>
<dbReference type="GO" id="GO:0005886">
    <property type="term" value="C:plasma membrane"/>
    <property type="evidence" value="ECO:0000318"/>
    <property type="project" value="GO_Central"/>
</dbReference>
<dbReference type="GO" id="GO:0001931">
    <property type="term" value="C:uropod"/>
    <property type="evidence" value="ECO:0007669"/>
    <property type="project" value="Ensembl"/>
</dbReference>
<dbReference type="GO" id="GO:0005178">
    <property type="term" value="F:integrin binding"/>
    <property type="evidence" value="ECO:0000318"/>
    <property type="project" value="GO_Central"/>
</dbReference>
<dbReference type="GO" id="GO:0007155">
    <property type="term" value="P:cell adhesion"/>
    <property type="evidence" value="ECO:0000318"/>
    <property type="project" value="GO_Central"/>
</dbReference>
<dbReference type="GO" id="GO:0098609">
    <property type="term" value="P:cell-cell adhesion"/>
    <property type="evidence" value="ECO:0007669"/>
    <property type="project" value="InterPro"/>
</dbReference>
<dbReference type="CDD" id="cd05755">
    <property type="entry name" value="IgC2_2_ICAM-1_like"/>
    <property type="match status" value="1"/>
</dbReference>
<dbReference type="CDD" id="cd20995">
    <property type="entry name" value="IgI_N_ICAM-2"/>
    <property type="match status" value="1"/>
</dbReference>
<dbReference type="FunFam" id="2.60.40.10:FF:000194">
    <property type="entry name" value="Intercellular adhesion molecule 1"/>
    <property type="match status" value="1"/>
</dbReference>
<dbReference type="FunFam" id="2.60.40.10:FF:000338">
    <property type="entry name" value="intercellular adhesion molecule 5"/>
    <property type="match status" value="1"/>
</dbReference>
<dbReference type="Gene3D" id="2.60.40.10">
    <property type="entry name" value="Immunoglobulins"/>
    <property type="match status" value="2"/>
</dbReference>
<dbReference type="InterPro" id="IPR003988">
    <property type="entry name" value="ICAM"/>
</dbReference>
<dbReference type="InterPro" id="IPR013768">
    <property type="entry name" value="ICAM_N"/>
</dbReference>
<dbReference type="InterPro" id="IPR047012">
    <property type="entry name" value="ICAM_VCAM"/>
</dbReference>
<dbReference type="InterPro" id="IPR003987">
    <property type="entry name" value="ICAM_VCAM_N"/>
</dbReference>
<dbReference type="InterPro" id="IPR036179">
    <property type="entry name" value="Ig-like_dom_sf"/>
</dbReference>
<dbReference type="InterPro" id="IPR013783">
    <property type="entry name" value="Ig-like_fold"/>
</dbReference>
<dbReference type="PANTHER" id="PTHR13771">
    <property type="entry name" value="INTERCELLULAR ADHESION MOLECULE"/>
    <property type="match status" value="1"/>
</dbReference>
<dbReference type="PANTHER" id="PTHR13771:SF3">
    <property type="entry name" value="INTERCELLULAR ADHESION MOLECULE 2"/>
    <property type="match status" value="1"/>
</dbReference>
<dbReference type="Pfam" id="PF03921">
    <property type="entry name" value="ICAM_N"/>
    <property type="match status" value="1"/>
</dbReference>
<dbReference type="PRINTS" id="PR01473">
    <property type="entry name" value="ICAM"/>
</dbReference>
<dbReference type="PRINTS" id="PR01472">
    <property type="entry name" value="ICAMVCAM1"/>
</dbReference>
<dbReference type="SUPFAM" id="SSF48726">
    <property type="entry name" value="Immunoglobulin"/>
    <property type="match status" value="2"/>
</dbReference>
<organism>
    <name type="scientific">Pan troglodytes</name>
    <name type="common">Chimpanzee</name>
    <dbReference type="NCBI Taxonomy" id="9598"/>
    <lineage>
        <taxon>Eukaryota</taxon>
        <taxon>Metazoa</taxon>
        <taxon>Chordata</taxon>
        <taxon>Craniata</taxon>
        <taxon>Vertebrata</taxon>
        <taxon>Euteleostomi</taxon>
        <taxon>Mammalia</taxon>
        <taxon>Eutheria</taxon>
        <taxon>Euarchontoglires</taxon>
        <taxon>Primates</taxon>
        <taxon>Haplorrhini</taxon>
        <taxon>Catarrhini</taxon>
        <taxon>Hominidae</taxon>
        <taxon>Pan</taxon>
    </lineage>
</organism>
<proteinExistence type="evidence at transcript level"/>
<reference key="1">
    <citation type="submission" date="2001-01" db="EMBL/GenBank/DDBJ databases">
        <title>The chimpanzee ICAM proteins have been positively selected.</title>
        <authorList>
            <person name="Messier W."/>
            <person name="Walter N.A.R."/>
            <person name="Hink R.L."/>
        </authorList>
    </citation>
    <scope>NUCLEOTIDE SEQUENCE [MRNA]</scope>
    <source>
        <strain>Isolate Angela</strain>
        <strain>Isolate Jenny</strain>
        <tissue>Blood</tissue>
    </source>
</reference>